<protein>
    <recommendedName>
        <fullName evidence="1">ATP synthase subunit beta, mitochondrial</fullName>
        <ecNumber evidence="3 4 5">7.1.2.2</ecNumber>
    </recommendedName>
</protein>
<name>ATPB_YARLI</name>
<keyword id="KW-0002">3D-structure</keyword>
<keyword id="KW-0066">ATP synthesis</keyword>
<keyword id="KW-0067">ATP-binding</keyword>
<keyword id="KW-0139">CF(1)</keyword>
<keyword id="KW-0375">Hydrogen ion transport</keyword>
<keyword id="KW-0406">Ion transport</keyword>
<keyword id="KW-0472">Membrane</keyword>
<keyword id="KW-0496">Mitochondrion</keyword>
<keyword id="KW-0999">Mitochondrion inner membrane</keyword>
<keyword id="KW-0547">Nucleotide-binding</keyword>
<keyword id="KW-1185">Reference proteome</keyword>
<keyword id="KW-0809">Transit peptide</keyword>
<keyword id="KW-1278">Translocase</keyword>
<keyword id="KW-0813">Transport</keyword>
<evidence type="ECO:0000250" key="1">
    <source>
        <dbReference type="UniProtKB" id="P00830"/>
    </source>
</evidence>
<evidence type="ECO:0000255" key="2">
    <source>
        <dbReference type="PROSITE-ProRule" id="PRU10106"/>
    </source>
</evidence>
<evidence type="ECO:0000255" key="3">
    <source>
        <dbReference type="RuleBase" id="RU003553"/>
    </source>
</evidence>
<evidence type="ECO:0000269" key="4">
    <source>
    </source>
</evidence>
<evidence type="ECO:0000269" key="5">
    <source>
    </source>
</evidence>
<evidence type="ECO:0000303" key="6">
    <source>
    </source>
</evidence>
<evidence type="ECO:0000305" key="7"/>
<evidence type="ECO:0000305" key="8">
    <source>
    </source>
</evidence>
<evidence type="ECO:0000312" key="9">
    <source>
        <dbReference type="EMBL" id="CAG82701.2"/>
    </source>
</evidence>
<evidence type="ECO:0000312" key="10">
    <source>
        <dbReference type="Proteomes" id="UP000001300"/>
    </source>
</evidence>
<evidence type="ECO:0007744" key="11">
    <source>
        <dbReference type="PDB" id="5FL7"/>
    </source>
</evidence>
<evidence type="ECO:0007829" key="12">
    <source>
        <dbReference type="PDB" id="5FL7"/>
    </source>
</evidence>
<accession>Q6CFT7</accession>
<feature type="transit peptide" description="Mitochondrion" evidence="4">
    <location>
        <begin position="1"/>
        <end position="32"/>
    </location>
</feature>
<feature type="chain" id="PRO_0000445312" description="ATP synthase subunit beta, mitochondrial" evidence="7">
    <location>
        <begin position="33"/>
        <end position="509"/>
    </location>
</feature>
<feature type="binding site" evidence="5 11">
    <location>
        <begin position="189"/>
        <end position="196"/>
    </location>
    <ligand>
        <name>ATP</name>
        <dbReference type="ChEBI" id="CHEBI:30616"/>
    </ligand>
</feature>
<feature type="site" description="Required for activity" evidence="2">
    <location>
        <position position="384"/>
    </location>
</feature>
<feature type="strand" evidence="12">
    <location>
        <begin position="40"/>
        <end position="47"/>
    </location>
</feature>
<feature type="strand" evidence="12">
    <location>
        <begin position="50"/>
        <end position="54"/>
    </location>
</feature>
<feature type="strand" evidence="12">
    <location>
        <begin position="66"/>
        <end position="69"/>
    </location>
</feature>
<feature type="strand" evidence="12">
    <location>
        <begin position="72"/>
        <end position="75"/>
    </location>
</feature>
<feature type="strand" evidence="12">
    <location>
        <begin position="77"/>
        <end position="86"/>
    </location>
</feature>
<feature type="strand" evidence="12">
    <location>
        <begin position="89"/>
        <end position="96"/>
    </location>
</feature>
<feature type="strand" evidence="12">
    <location>
        <begin position="106"/>
        <end position="109"/>
    </location>
</feature>
<feature type="strand" evidence="12">
    <location>
        <begin position="111"/>
        <end position="113"/>
    </location>
</feature>
<feature type="strand" evidence="12">
    <location>
        <begin position="115"/>
        <end position="117"/>
    </location>
</feature>
<feature type="helix" evidence="12">
    <location>
        <begin position="120"/>
        <end position="122"/>
    </location>
</feature>
<feature type="strand" evidence="12">
    <location>
        <begin position="133"/>
        <end position="135"/>
    </location>
</feature>
<feature type="strand" evidence="12">
    <location>
        <begin position="145"/>
        <end position="148"/>
    </location>
</feature>
<feature type="helix" evidence="12">
    <location>
        <begin position="155"/>
        <end position="157"/>
    </location>
</feature>
<feature type="turn" evidence="12">
    <location>
        <begin position="170"/>
        <end position="175"/>
    </location>
</feature>
<feature type="strand" evidence="12">
    <location>
        <begin position="182"/>
        <end position="186"/>
    </location>
</feature>
<feature type="strand" evidence="12">
    <location>
        <begin position="192"/>
        <end position="194"/>
    </location>
</feature>
<feature type="helix" evidence="12">
    <location>
        <begin position="195"/>
        <end position="208"/>
    </location>
</feature>
<feature type="strand" evidence="12">
    <location>
        <begin position="213"/>
        <end position="219"/>
    </location>
</feature>
<feature type="helix" evidence="12">
    <location>
        <begin position="222"/>
        <end position="235"/>
    </location>
</feature>
<feature type="strand" evidence="12">
    <location>
        <begin position="236"/>
        <end position="238"/>
    </location>
</feature>
<feature type="strand" evidence="12">
    <location>
        <begin position="240"/>
        <end position="242"/>
    </location>
</feature>
<feature type="strand" evidence="12">
    <location>
        <begin position="245"/>
        <end position="251"/>
    </location>
</feature>
<feature type="helix" evidence="12">
    <location>
        <begin position="257"/>
        <end position="260"/>
    </location>
</feature>
<feature type="helix" evidence="12">
    <location>
        <begin position="263"/>
        <end position="276"/>
    </location>
</feature>
<feature type="strand" evidence="12">
    <location>
        <begin position="281"/>
        <end position="287"/>
    </location>
</feature>
<feature type="helix" evidence="12">
    <location>
        <begin position="289"/>
        <end position="300"/>
    </location>
</feature>
<feature type="turn" evidence="12">
    <location>
        <begin position="301"/>
        <end position="304"/>
    </location>
</feature>
<feature type="helix" evidence="12">
    <location>
        <begin position="309"/>
        <end position="311"/>
    </location>
</feature>
<feature type="helix" evidence="12">
    <location>
        <begin position="317"/>
        <end position="324"/>
    </location>
</feature>
<feature type="strand" evidence="12">
    <location>
        <begin position="330"/>
        <end position="332"/>
    </location>
</feature>
<feature type="strand" evidence="12">
    <location>
        <begin position="334"/>
        <end position="340"/>
    </location>
</feature>
<feature type="helix" evidence="12">
    <location>
        <begin position="344"/>
        <end position="346"/>
    </location>
</feature>
<feature type="helix" evidence="12">
    <location>
        <begin position="351"/>
        <end position="356"/>
    </location>
</feature>
<feature type="turn" evidence="12">
    <location>
        <begin position="357"/>
        <end position="359"/>
    </location>
</feature>
<feature type="strand" evidence="12">
    <location>
        <begin position="361"/>
        <end position="364"/>
    </location>
</feature>
<feature type="helix" evidence="12">
    <location>
        <begin position="368"/>
        <end position="372"/>
    </location>
</feature>
<feature type="turn" evidence="12">
    <location>
        <begin position="381"/>
        <end position="383"/>
    </location>
</feature>
<feature type="turn" evidence="12">
    <location>
        <begin position="391"/>
        <end position="393"/>
    </location>
</feature>
<feature type="helix" evidence="12">
    <location>
        <begin position="396"/>
        <end position="414"/>
    </location>
</feature>
<feature type="helix" evidence="12">
    <location>
        <begin position="416"/>
        <end position="421"/>
    </location>
</feature>
<feature type="turn" evidence="12">
    <location>
        <begin position="422"/>
        <end position="425"/>
    </location>
</feature>
<feature type="helix" evidence="12">
    <location>
        <begin position="429"/>
        <end position="445"/>
    </location>
</feature>
<feature type="helix" evidence="12">
    <location>
        <begin position="453"/>
        <end position="456"/>
    </location>
</feature>
<feature type="helix" evidence="12">
    <location>
        <begin position="466"/>
        <end position="476"/>
    </location>
</feature>
<feature type="helix" evidence="12">
    <location>
        <begin position="485"/>
        <end position="487"/>
    </location>
</feature>
<feature type="helix" evidence="12">
    <location>
        <begin position="497"/>
        <end position="505"/>
    </location>
</feature>
<proteinExistence type="evidence at protein level"/>
<reference evidence="10" key="1">
    <citation type="journal article" date="2004" name="Nature">
        <title>Genome evolution in yeasts.</title>
        <authorList>
            <person name="Dujon B."/>
            <person name="Sherman D."/>
            <person name="Fischer G."/>
            <person name="Durrens P."/>
            <person name="Casaregola S."/>
            <person name="Lafontaine I."/>
            <person name="de Montigny J."/>
            <person name="Marck C."/>
            <person name="Neuveglise C."/>
            <person name="Talla E."/>
            <person name="Goffard N."/>
            <person name="Frangeul L."/>
            <person name="Aigle M."/>
            <person name="Anthouard V."/>
            <person name="Babour A."/>
            <person name="Barbe V."/>
            <person name="Barnay S."/>
            <person name="Blanchin S."/>
            <person name="Beckerich J.-M."/>
            <person name="Beyne E."/>
            <person name="Bleykasten C."/>
            <person name="Boisrame A."/>
            <person name="Boyer J."/>
            <person name="Cattolico L."/>
            <person name="Confanioleri F."/>
            <person name="de Daruvar A."/>
            <person name="Despons L."/>
            <person name="Fabre E."/>
            <person name="Fairhead C."/>
            <person name="Ferry-Dumazet H."/>
            <person name="Groppi A."/>
            <person name="Hantraye F."/>
            <person name="Hennequin C."/>
            <person name="Jauniaux N."/>
            <person name="Joyet P."/>
            <person name="Kachouri R."/>
            <person name="Kerrest A."/>
            <person name="Koszul R."/>
            <person name="Lemaire M."/>
            <person name="Lesur I."/>
            <person name="Ma L."/>
            <person name="Muller H."/>
            <person name="Nicaud J.-M."/>
            <person name="Nikolski M."/>
            <person name="Oztas S."/>
            <person name="Ozier-Kalogeropoulos O."/>
            <person name="Pellenz S."/>
            <person name="Potier S."/>
            <person name="Richard G.-F."/>
            <person name="Straub M.-L."/>
            <person name="Suleau A."/>
            <person name="Swennen D."/>
            <person name="Tekaia F."/>
            <person name="Wesolowski-Louvel M."/>
            <person name="Westhof E."/>
            <person name="Wirth B."/>
            <person name="Zeniou-Meyer M."/>
            <person name="Zivanovic Y."/>
            <person name="Bolotin-Fukuhara M."/>
            <person name="Thierry A."/>
            <person name="Bouchier C."/>
            <person name="Caudron B."/>
            <person name="Scarpelli C."/>
            <person name="Gaillardin C."/>
            <person name="Weissenbach J."/>
            <person name="Wincker P."/>
            <person name="Souciet J.-L."/>
        </authorList>
    </citation>
    <scope>NUCLEOTIDE SEQUENCE [LARGE SCALE GENOMIC DNA]</scope>
    <source>
        <strain>CLIB 122 / E 150</strain>
    </source>
</reference>
<reference evidence="7" key="2">
    <citation type="journal article" date="2015" name="Biochem. J.">
        <title>The purification and characterization of ATP synthase complexes from the mitochondria of four fungal species.</title>
        <authorList>
            <person name="Liu S."/>
            <person name="Charlesworth T.J."/>
            <person name="Bason J.V."/>
            <person name="Montgomery M.G."/>
            <person name="Harbour M.E."/>
            <person name="Fearnley I.M."/>
            <person name="Walker J.E."/>
        </authorList>
    </citation>
    <scope>IDENTIFICATION IN ATP SYNTHASE COMPLEX</scope>
    <scope>FUNCTION OF ATP SYNTHASE COMPLEX</scope>
    <scope>SUBUNIT</scope>
    <scope>CATALYTIC ACTIVITY</scope>
    <scope>SUBCELLULAR LOCATION</scope>
    <scope>MASS SPECTROMETRY</scope>
    <scope>IDENTIFICATION BY MASS SPECTROMETRY</scope>
    <source>
        <strain evidence="6">CLIB 122 / E 150</strain>
    </source>
</reference>
<reference evidence="7" key="3">
    <citation type="journal article" date="2016" name="Mol. Cell">
        <title>Structure of a Complete ATP Synthase Dimer Reveals the Molecular Basis of Inner Mitochondrial Membrane Morphology.</title>
        <authorList>
            <person name="Hahn A."/>
            <person name="Parey K."/>
            <person name="Bublitz M."/>
            <person name="Mills D.J."/>
            <person name="Zickermann V."/>
            <person name="Vonck J."/>
            <person name="Kuehlbrandt W."/>
            <person name="Meier T."/>
        </authorList>
    </citation>
    <scope>X-RAY CRYSTALLOGRAPHY (3.5 ANGSTROMS) OF ATP SYNTHASE F1C10 COMPLEX</scope>
    <scope>STRUCTURE BY ELECTRON MICROSCOPY (7.7 ANGSTROMS) OF DIMERIC ATP SYNTHASE COMPLEX</scope>
    <scope>FUNCTION</scope>
    <scope>CATALYTIC ACTIVITY</scope>
    <scope>SUBUNIT</scope>
    <scope>SUBCELLULAR LOCATION</scope>
    <scope>IDENTIFICATION BY MASS SPECTROMETRY</scope>
</reference>
<dbReference type="EC" id="7.1.2.2" evidence="3 4 5"/>
<dbReference type="EMBL" id="CR382128">
    <property type="protein sequence ID" value="CAG82701.2"/>
    <property type="molecule type" value="Genomic_DNA"/>
</dbReference>
<dbReference type="RefSeq" id="XP_500475.2">
    <property type="nucleotide sequence ID" value="XM_500475.2"/>
</dbReference>
<dbReference type="PDB" id="5FL7">
    <property type="method" value="X-ray"/>
    <property type="resolution" value="3.50 A"/>
    <property type="chains" value="D/E/F=1-509"/>
</dbReference>
<dbReference type="PDBsum" id="5FL7"/>
<dbReference type="SMR" id="Q6CFT7"/>
<dbReference type="FunCoup" id="Q6CFT7">
    <property type="interactions" value="1201"/>
</dbReference>
<dbReference type="STRING" id="284591.Q6CFT7"/>
<dbReference type="EnsemblFungi" id="CAG82701">
    <property type="protein sequence ID" value="CAG82701"/>
    <property type="gene ID" value="YALI0_B03982g"/>
</dbReference>
<dbReference type="KEGG" id="yli:2907185"/>
<dbReference type="VEuPathDB" id="FungiDB:YALI0_B03982g"/>
<dbReference type="HOGENOM" id="CLU_022398_0_2_1"/>
<dbReference type="InParanoid" id="Q6CFT7"/>
<dbReference type="OMA" id="SMEEGGW"/>
<dbReference type="OrthoDB" id="105734at4891"/>
<dbReference type="Proteomes" id="UP000001300">
    <property type="component" value="Chromosome B"/>
</dbReference>
<dbReference type="GO" id="GO:0005743">
    <property type="term" value="C:mitochondrial inner membrane"/>
    <property type="evidence" value="ECO:0007669"/>
    <property type="project" value="UniProtKB-SubCell"/>
</dbReference>
<dbReference type="GO" id="GO:0045259">
    <property type="term" value="C:proton-transporting ATP synthase complex"/>
    <property type="evidence" value="ECO:0007669"/>
    <property type="project" value="UniProtKB-KW"/>
</dbReference>
<dbReference type="GO" id="GO:0043531">
    <property type="term" value="F:ADP binding"/>
    <property type="evidence" value="ECO:0007669"/>
    <property type="project" value="EnsemblFungi"/>
</dbReference>
<dbReference type="GO" id="GO:0005524">
    <property type="term" value="F:ATP binding"/>
    <property type="evidence" value="ECO:0007669"/>
    <property type="project" value="UniProtKB-KW"/>
</dbReference>
<dbReference type="GO" id="GO:0016887">
    <property type="term" value="F:ATP hydrolysis activity"/>
    <property type="evidence" value="ECO:0007669"/>
    <property type="project" value="InterPro"/>
</dbReference>
<dbReference type="GO" id="GO:0046933">
    <property type="term" value="F:proton-transporting ATP synthase activity, rotational mechanism"/>
    <property type="evidence" value="ECO:0007669"/>
    <property type="project" value="EnsemblFungi"/>
</dbReference>
<dbReference type="GO" id="GO:0042776">
    <property type="term" value="P:proton motive force-driven mitochondrial ATP synthesis"/>
    <property type="evidence" value="ECO:0000318"/>
    <property type="project" value="GO_Central"/>
</dbReference>
<dbReference type="CDD" id="cd18110">
    <property type="entry name" value="ATP-synt_F1_beta_C"/>
    <property type="match status" value="1"/>
</dbReference>
<dbReference type="CDD" id="cd18115">
    <property type="entry name" value="ATP-synt_F1_beta_N"/>
    <property type="match status" value="1"/>
</dbReference>
<dbReference type="CDD" id="cd01133">
    <property type="entry name" value="F1-ATPase_beta_CD"/>
    <property type="match status" value="1"/>
</dbReference>
<dbReference type="FunFam" id="1.10.1140.10:FF:000001">
    <property type="entry name" value="ATP synthase subunit beta"/>
    <property type="match status" value="1"/>
</dbReference>
<dbReference type="FunFam" id="2.40.10.170:FF:000005">
    <property type="entry name" value="ATP synthase subunit beta"/>
    <property type="match status" value="1"/>
</dbReference>
<dbReference type="FunFam" id="3.40.50.300:FF:000026">
    <property type="entry name" value="ATP synthase subunit beta"/>
    <property type="match status" value="1"/>
</dbReference>
<dbReference type="Gene3D" id="2.40.10.170">
    <property type="match status" value="1"/>
</dbReference>
<dbReference type="Gene3D" id="1.10.1140.10">
    <property type="entry name" value="Bovine Mitochondrial F1-atpase, Atp Synthase Beta Chain, Chain D, domain 3"/>
    <property type="match status" value="1"/>
</dbReference>
<dbReference type="Gene3D" id="3.40.50.300">
    <property type="entry name" value="P-loop containing nucleotide triphosphate hydrolases"/>
    <property type="match status" value="1"/>
</dbReference>
<dbReference type="HAMAP" id="MF_01347">
    <property type="entry name" value="ATP_synth_beta_bact"/>
    <property type="match status" value="1"/>
</dbReference>
<dbReference type="InterPro" id="IPR003593">
    <property type="entry name" value="AAA+_ATPase"/>
</dbReference>
<dbReference type="InterPro" id="IPR055190">
    <property type="entry name" value="ATP-synt_VA_C"/>
</dbReference>
<dbReference type="InterPro" id="IPR005722">
    <property type="entry name" value="ATP_synth_F1_bsu"/>
</dbReference>
<dbReference type="InterPro" id="IPR020003">
    <property type="entry name" value="ATPase_a/bsu_AS"/>
</dbReference>
<dbReference type="InterPro" id="IPR050053">
    <property type="entry name" value="ATPase_alpha/beta_chains"/>
</dbReference>
<dbReference type="InterPro" id="IPR004100">
    <property type="entry name" value="ATPase_F1/V1/A1_a/bsu_N"/>
</dbReference>
<dbReference type="InterPro" id="IPR036121">
    <property type="entry name" value="ATPase_F1/V1/A1_a/bsu_N_sf"/>
</dbReference>
<dbReference type="InterPro" id="IPR000194">
    <property type="entry name" value="ATPase_F1/V1/A1_a/bsu_nucl-bd"/>
</dbReference>
<dbReference type="InterPro" id="IPR024034">
    <property type="entry name" value="ATPase_F1/V1_b/a_C"/>
</dbReference>
<dbReference type="InterPro" id="IPR027417">
    <property type="entry name" value="P-loop_NTPase"/>
</dbReference>
<dbReference type="NCBIfam" id="TIGR01039">
    <property type="entry name" value="atpD"/>
    <property type="match status" value="1"/>
</dbReference>
<dbReference type="PANTHER" id="PTHR15184">
    <property type="entry name" value="ATP SYNTHASE"/>
    <property type="match status" value="1"/>
</dbReference>
<dbReference type="PANTHER" id="PTHR15184:SF71">
    <property type="entry name" value="ATP SYNTHASE SUBUNIT BETA, MITOCHONDRIAL"/>
    <property type="match status" value="1"/>
</dbReference>
<dbReference type="Pfam" id="PF00006">
    <property type="entry name" value="ATP-synt_ab"/>
    <property type="match status" value="1"/>
</dbReference>
<dbReference type="Pfam" id="PF02874">
    <property type="entry name" value="ATP-synt_ab_N"/>
    <property type="match status" value="1"/>
</dbReference>
<dbReference type="Pfam" id="PF22919">
    <property type="entry name" value="ATP-synt_VA_C"/>
    <property type="match status" value="1"/>
</dbReference>
<dbReference type="PIRSF" id="PIRSF039072">
    <property type="entry name" value="ATPase_subunit_beta"/>
    <property type="match status" value="1"/>
</dbReference>
<dbReference type="SMART" id="SM00382">
    <property type="entry name" value="AAA"/>
    <property type="match status" value="1"/>
</dbReference>
<dbReference type="SUPFAM" id="SSF47917">
    <property type="entry name" value="C-terminal domain of alpha and beta subunits of F1 ATP synthase"/>
    <property type="match status" value="1"/>
</dbReference>
<dbReference type="SUPFAM" id="SSF50615">
    <property type="entry name" value="N-terminal domain of alpha and beta subunits of F1 ATP synthase"/>
    <property type="match status" value="1"/>
</dbReference>
<dbReference type="SUPFAM" id="SSF52540">
    <property type="entry name" value="P-loop containing nucleoside triphosphate hydrolases"/>
    <property type="match status" value="1"/>
</dbReference>
<dbReference type="PROSITE" id="PS00152">
    <property type="entry name" value="ATPASE_ALPHA_BETA"/>
    <property type="match status" value="1"/>
</dbReference>
<sequence>MVLPRLIPRLSRSAFKVAQANNRVFNAPFRGMASSAGVGSGKIRTVIGAVVDVQFEQDNLPAILNALTIDRGEGNKLVLEVAQHLGENTVRTIAMDGTEGLVRGTSVADTGAPITIPVGRGTLGRIINVCGEPIDERGPIEATKFLPIHADPPTFAEQSTTAEVLETGIKVVDLLAPYARGGKIGLFGGAGVGKTVFIQELINNIAKAHGGFSVFCGVGERTREGNDLYREMKETGVINLEGESKVTLVFGQMNEPPGARARVALTGLTIAEYFRDEEGQDVLLFVDNIFRFTQAGSEVSALLGRIPSAVGYQPTLATDMGALQERITTTQKGSVTSVQAVYVPADDLTDPAPATTFAHLDATTVLSRGISELGIYPAVDPLDSKSRLLDIDVVGQEHYDVASNVQQTLQAYKSLQDIIAILGMDELSEQDKLTVERARKIQRFLSQPFTVAEVFTGIEGRLVSLKDTVRSFKEILDGKHDALPEAAFYMVGGIEEVVAKAEKLAAESK</sequence>
<comment type="function">
    <text evidence="4 5">Mitochondrial membrane ATP synthase (F(1)F(0) ATP synthase or Complex V) produces ATP from ADP in the presence of a proton gradient across the membrane which is generated by electron transport complexes of the respiratory chain (PubMed:25759169). F-type ATP synthases consist of two structural domains, F(1) - containing the extramembraneous catalytic core, and F(0) - containing the membrane proton channel, linked together by a central stalk and a peripheral stalk (PubMed:27373333). During catalysis, ATP synthesis in the catalytic domain of F(1) is coupled via a rotary mechanism of the central stalk subunits to proton translocation (PubMed:27373333). Subunits alpha/ATP1 and beta/ATP2 form the catalytic core in F(1) (PubMed:27373333). Rotation of the central stalk against the surrounding alpha/ATP1(3)beta/ATP2(3) subunits leads to hydrolysis of ATP in three separate catalytic sites on the beta/ATP2 subunits (PubMed:27373333).</text>
</comment>
<comment type="catalytic activity">
    <reaction evidence="3 4 5">
        <text>ATP + H2O + 4 H(+)(in) = ADP + phosphate + 5 H(+)(out)</text>
        <dbReference type="Rhea" id="RHEA:57720"/>
        <dbReference type="ChEBI" id="CHEBI:15377"/>
        <dbReference type="ChEBI" id="CHEBI:15378"/>
        <dbReference type="ChEBI" id="CHEBI:30616"/>
        <dbReference type="ChEBI" id="CHEBI:43474"/>
        <dbReference type="ChEBI" id="CHEBI:456216"/>
        <dbReference type="EC" id="7.1.2.2"/>
    </reaction>
</comment>
<comment type="subunit">
    <text evidence="4 5">F-type ATP synthases have 2 components, the catalytic core F(1) and the membrane-embedded component F(0), linked together by a central stalk and a peripheral stalk (PubMed:27373333). The central stalk, also called rotor shaft, is often seen as part of F(1) (PubMed:27373333). The peripheral stalk is seen as part of F(0) (PubMed:27373333). F(0) contains the membrane channel next to the rotor (PubMed:27373333). F-type ATP synthases form dimers but each monomer functions independently in ATP generation (PubMed:27373333). The dimer consists of 17 different polypeptides: ATP1 (subunit alpha, 3 molecules per monomer, part of F(1)), ATP2 (subunit beta, 3 copies per monomer, part of F(1)), ATP3 (subunit gamma, part of the central stalk), ATP4 (subunit b, part of the peripheral stalk), ATP5/OSCP (subunit 5/OSCP, part of the peripheral stalk), ATP6 (subunit a, part of the peripheral stalk), ATP7 (subunit d, part of the peripheral stalk), ATP8 (subunit 8, part of the peripheral stalk), OLI1 (subunit c, part of the rotor, 10 molecules per monomer), ATP14 (subunit h, part of the peripheral stalk), ATP15 (subunit epsilon, part of the central stalk), ATP16 (subunit delta, part of the central stalk), ATP17 (subunit f, part of the peripheral stalk), ATP18 (subunit i/j, part of the peripheral stalk), ATP19 (subunit k, dimer-specific, at interface between monomers), ATP20 (subunit g, at interface between monomers), TIM11 (subunit e, at interface between monomers) (PubMed:25759169, PubMed:27373333).</text>
</comment>
<comment type="subcellular location">
    <subcellularLocation>
        <location evidence="8">Mitochondrion inner membrane</location>
        <topology evidence="8">Peripheral membrane protein</topology>
        <orientation evidence="8">Matrix side</orientation>
    </subcellularLocation>
    <text evidence="8">The F-type ATP synthase complex is anchored in the mitochondrial inner membrane via the F(0) domain with the F(1) domain and the peripheral stalk extending into the mitochondrial matrix.</text>
</comment>
<comment type="mass spectrometry"/>
<comment type="similarity">
    <text evidence="7">Belongs to the ATPase alpha/beta chains family.</text>
</comment>
<organism evidence="10">
    <name type="scientific">Yarrowia lipolytica (strain CLIB 122 / E 150)</name>
    <name type="common">Yeast</name>
    <name type="synonym">Candida lipolytica</name>
    <dbReference type="NCBI Taxonomy" id="284591"/>
    <lineage>
        <taxon>Eukaryota</taxon>
        <taxon>Fungi</taxon>
        <taxon>Dikarya</taxon>
        <taxon>Ascomycota</taxon>
        <taxon>Saccharomycotina</taxon>
        <taxon>Dipodascomycetes</taxon>
        <taxon>Dipodascales</taxon>
        <taxon>Dipodascales incertae sedis</taxon>
        <taxon>Yarrowia</taxon>
    </lineage>
</organism>
<gene>
    <name evidence="1" type="primary">ATP2</name>
    <name evidence="9" type="ordered locus">YALI0_B03982g</name>
</gene>